<name>IFNG_BOSIN</name>
<dbReference type="EMBL" id="AF533686">
    <property type="protein sequence ID" value="AAO33773.1"/>
    <property type="molecule type" value="mRNA"/>
</dbReference>
<dbReference type="SMR" id="Q866Y6"/>
<dbReference type="GlyCosmos" id="Q866Y6">
    <property type="glycosylation" value="2 sites, No reported glycans"/>
</dbReference>
<dbReference type="GO" id="GO:0005615">
    <property type="term" value="C:extracellular space"/>
    <property type="evidence" value="ECO:0007669"/>
    <property type="project" value="UniProtKB-KW"/>
</dbReference>
<dbReference type="GO" id="GO:0005125">
    <property type="term" value="F:cytokine activity"/>
    <property type="evidence" value="ECO:0007669"/>
    <property type="project" value="UniProtKB-KW"/>
</dbReference>
<dbReference type="GO" id="GO:0005133">
    <property type="term" value="F:type II interferon receptor binding"/>
    <property type="evidence" value="ECO:0007669"/>
    <property type="project" value="InterPro"/>
</dbReference>
<dbReference type="GO" id="GO:0002250">
    <property type="term" value="P:adaptive immune response"/>
    <property type="evidence" value="ECO:0007669"/>
    <property type="project" value="TreeGrafter"/>
</dbReference>
<dbReference type="GO" id="GO:0051607">
    <property type="term" value="P:defense response to virus"/>
    <property type="evidence" value="ECO:0007669"/>
    <property type="project" value="UniProtKB-KW"/>
</dbReference>
<dbReference type="GO" id="GO:0006959">
    <property type="term" value="P:humoral immune response"/>
    <property type="evidence" value="ECO:0007669"/>
    <property type="project" value="TreeGrafter"/>
</dbReference>
<dbReference type="GO" id="GO:0009891">
    <property type="term" value="P:positive regulation of biosynthetic process"/>
    <property type="evidence" value="ECO:0007669"/>
    <property type="project" value="UniProtKB-ARBA"/>
</dbReference>
<dbReference type="FunFam" id="1.20.1250.10:FF:000080">
    <property type="entry name" value="Interferon gamma"/>
    <property type="match status" value="1"/>
</dbReference>
<dbReference type="Gene3D" id="1.20.1250.10">
    <property type="match status" value="1"/>
</dbReference>
<dbReference type="InterPro" id="IPR009079">
    <property type="entry name" value="4_helix_cytokine-like_core"/>
</dbReference>
<dbReference type="InterPro" id="IPR002069">
    <property type="entry name" value="Interferon_gamma"/>
</dbReference>
<dbReference type="PANTHER" id="PTHR11419">
    <property type="entry name" value="INTERFERON GAMMA"/>
    <property type="match status" value="1"/>
</dbReference>
<dbReference type="PANTHER" id="PTHR11419:SF0">
    <property type="entry name" value="INTERFERON GAMMA"/>
    <property type="match status" value="1"/>
</dbReference>
<dbReference type="Pfam" id="PF00714">
    <property type="entry name" value="IFN-gamma"/>
    <property type="match status" value="1"/>
</dbReference>
<dbReference type="PIRSF" id="PIRSF001936">
    <property type="entry name" value="IFN-gamma"/>
    <property type="match status" value="1"/>
</dbReference>
<dbReference type="SUPFAM" id="SSF47266">
    <property type="entry name" value="4-helical cytokines"/>
    <property type="match status" value="1"/>
</dbReference>
<organism>
    <name type="scientific">Bos indicus</name>
    <name type="common">Zebu</name>
    <dbReference type="NCBI Taxonomy" id="9915"/>
    <lineage>
        <taxon>Eukaryota</taxon>
        <taxon>Metazoa</taxon>
        <taxon>Chordata</taxon>
        <taxon>Craniata</taxon>
        <taxon>Vertebrata</taxon>
        <taxon>Euteleostomi</taxon>
        <taxon>Mammalia</taxon>
        <taxon>Eutheria</taxon>
        <taxon>Laurasiatheria</taxon>
        <taxon>Artiodactyla</taxon>
        <taxon>Ruminantia</taxon>
        <taxon>Pecora</taxon>
        <taxon>Bovidae</taxon>
        <taxon>Bovinae</taxon>
        <taxon>Bos</taxon>
    </lineage>
</organism>
<sequence length="166" mass="19420">MKYTSYFLALLLCVLLGFSGSYGQGQFFREIENLKEYFNASSPDVAKGGPLFSEILKNWKDESDKKIIQSQIVSFYFKLFENLKDNQVIQRSMDIIKQDMFQKFLNGSSEKPEDFKKLIQIPVDDLQIQRKAINELIKVMNDLSPKSNLRKRKRSQNLFRGRRASM</sequence>
<accession>Q866Y6</accession>
<proteinExistence type="evidence at transcript level"/>
<comment type="function">
    <text evidence="2 3">Type II interferon produced by immune cells such as T-cells and NK cells that plays crucial roles in antimicrobial, antiviral, and antitumor responses by activating effector immune cells and enhancing antigen presentation. Primarily signals through the JAK-STAT pathway after interaction with its receptor IFNGR1 to affect gene regulation. Upon IFNG binding, IFNGR1 intracellular domain opens out to allow association of downstream signaling components JAK2, JAK1 and STAT1, leading to STAT1 activation, nuclear translocation and transcription of IFNG-regulated genes. Many of the induced genes are transcription factors such as IRF1 that are able to further drive regulation of a next wave of transcription. Plays a role in class I antigen presentation pathway by inducing a replacement of catalytic proteasome subunits with immunoproteasome subunits. In turn, increases the quantity, quality, and repertoire of peptides for class I MHC loading. Increases the efficiency of peptide generation also by inducing the expression of activator PA28 that associates with the proteasome and alters its proteolytic cleavage preference. Up-regulates as well MHC II complexes on the cell surface by promoting expression of several key molecules such as cathepsins B/CTSB, H/CTSH, and L/CTSL (By similarity). Participates in the regulation of hematopoietic stem cells during development and under homeostatic conditions by affecting their development, quiescence, and differentiation (By similarity).</text>
</comment>
<comment type="subunit">
    <text evidence="2">Homodimer. Interacts with IFNGR1 (via extracellular domain); this interaction promotes IFNGR1 dimerization.</text>
</comment>
<comment type="subcellular location">
    <subcellularLocation>
        <location evidence="2">Secreted</location>
    </subcellularLocation>
</comment>
<comment type="tissue specificity">
    <text>Released primarily from activated T lymphocytes.</text>
</comment>
<comment type="similarity">
    <text evidence="5">Belongs to the type II (or gamma) interferon family.</text>
</comment>
<keyword id="KW-0051">Antiviral defense</keyword>
<keyword id="KW-0202">Cytokine</keyword>
<keyword id="KW-0325">Glycoprotein</keyword>
<keyword id="KW-0341">Growth regulation</keyword>
<keyword id="KW-0873">Pyrrolidone carboxylic acid</keyword>
<keyword id="KW-0964">Secreted</keyword>
<keyword id="KW-0732">Signal</keyword>
<evidence type="ECO:0000250" key="1"/>
<evidence type="ECO:0000250" key="2">
    <source>
        <dbReference type="UniProtKB" id="P01579"/>
    </source>
</evidence>
<evidence type="ECO:0000250" key="3">
    <source>
        <dbReference type="UniProtKB" id="P01580"/>
    </source>
</evidence>
<evidence type="ECO:0000255" key="4"/>
<evidence type="ECO:0000305" key="5"/>
<protein>
    <recommendedName>
        <fullName>Interferon gamma</fullName>
        <shortName>IFN-gamma</shortName>
    </recommendedName>
</protein>
<gene>
    <name type="primary">IFNG</name>
</gene>
<reference key="1">
    <citation type="submission" date="2002-07" db="EMBL/GenBank/DDBJ databases">
        <title>Cloning, sequencing and expression of bovine gamma interferon.</title>
        <authorList>
            <person name="Ravi Kumar P."/>
            <person name="Prabhudas K."/>
            <person name="Ramalingareddy G."/>
            <person name="Suryanarayana V.V.S."/>
        </authorList>
    </citation>
    <scope>NUCLEOTIDE SEQUENCE [MRNA]</scope>
    <source>
        <strain>Hallikar</strain>
        <tissue>Peripheral blood lymphocyte</tissue>
    </source>
</reference>
<feature type="signal peptide" evidence="1">
    <location>
        <begin position="1"/>
        <end position="23"/>
    </location>
</feature>
<feature type="chain" id="PRO_0000016432" description="Interferon gamma">
    <location>
        <begin position="24"/>
        <end position="166"/>
    </location>
</feature>
<feature type="modified residue" description="Pyrrolidone carboxylic acid" evidence="2">
    <location>
        <position position="24"/>
    </location>
</feature>
<feature type="glycosylation site" description="N-linked (GlcNAc...) asparagine" evidence="4">
    <location>
        <position position="39"/>
    </location>
</feature>
<feature type="glycosylation site" description="N-linked (GlcNAc...) asparagine" evidence="4">
    <location>
        <position position="106"/>
    </location>
</feature>